<name>3MGH_WOLPP</name>
<evidence type="ECO:0000255" key="1">
    <source>
        <dbReference type="HAMAP-Rule" id="MF_00527"/>
    </source>
</evidence>
<reference key="1">
    <citation type="journal article" date="2008" name="Mol. Biol. Evol.">
        <title>Genome evolution of Wolbachia strain wPip from the Culex pipiens group.</title>
        <authorList>
            <person name="Klasson L."/>
            <person name="Walker T."/>
            <person name="Sebaihia M."/>
            <person name="Sanders M.J."/>
            <person name="Quail M.A."/>
            <person name="Lord A."/>
            <person name="Sanders S."/>
            <person name="Earl J."/>
            <person name="O'Neill S.L."/>
            <person name="Thomson N."/>
            <person name="Sinkins S.P."/>
            <person name="Parkhill J."/>
        </authorList>
    </citation>
    <scope>NUCLEOTIDE SEQUENCE [LARGE SCALE GENOMIC DNA]</scope>
    <source>
        <strain>wPip</strain>
    </source>
</reference>
<sequence>MNNTILPRNFYERPTLTVAGELLGKMLKFSNFSGIITEVEAYIGMDDPACHAARGYTNRTSVMFGTPGFSYVYFIYGMYYCLNIVTEAEGFPAAVLIRGLKLTEPLEANLGGPGILCKKLNITKEHNKQDLTISHEFCLYEYHLKPDYVCTPRIGISKGKEKFWRFKSCVLADMPKITLNNKY</sequence>
<feature type="chain" id="PRO_1000127764" description="Putative 3-methyladenine DNA glycosylase">
    <location>
        <begin position="1"/>
        <end position="183"/>
    </location>
</feature>
<gene>
    <name type="ordered locus">WP0867</name>
</gene>
<keyword id="KW-0227">DNA damage</keyword>
<keyword id="KW-0234">DNA repair</keyword>
<keyword id="KW-0378">Hydrolase</keyword>
<proteinExistence type="inferred from homology"/>
<protein>
    <recommendedName>
        <fullName evidence="1">Putative 3-methyladenine DNA glycosylase</fullName>
        <ecNumber evidence="1">3.2.2.-</ecNumber>
    </recommendedName>
</protein>
<organism>
    <name type="scientific">Wolbachia pipientis subsp. Culex pipiens (strain wPip)</name>
    <dbReference type="NCBI Taxonomy" id="570417"/>
    <lineage>
        <taxon>Bacteria</taxon>
        <taxon>Pseudomonadati</taxon>
        <taxon>Pseudomonadota</taxon>
        <taxon>Alphaproteobacteria</taxon>
        <taxon>Rickettsiales</taxon>
        <taxon>Anaplasmataceae</taxon>
        <taxon>Wolbachieae</taxon>
        <taxon>Wolbachia</taxon>
    </lineage>
</organism>
<comment type="similarity">
    <text evidence="1">Belongs to the DNA glycosylase MPG family.</text>
</comment>
<accession>B3CM56</accession>
<dbReference type="EC" id="3.2.2.-" evidence="1"/>
<dbReference type="EMBL" id="AM999887">
    <property type="protein sequence ID" value="CAQ54975.1"/>
    <property type="molecule type" value="Genomic_DNA"/>
</dbReference>
<dbReference type="RefSeq" id="WP_012481934.1">
    <property type="nucleotide sequence ID" value="NC_010981.1"/>
</dbReference>
<dbReference type="SMR" id="B3CM56"/>
<dbReference type="KEGG" id="wpi:WP0867"/>
<dbReference type="eggNOG" id="COG2094">
    <property type="taxonomic scope" value="Bacteria"/>
</dbReference>
<dbReference type="HOGENOM" id="CLU_060471_4_1_5"/>
<dbReference type="Proteomes" id="UP000008814">
    <property type="component" value="Chromosome"/>
</dbReference>
<dbReference type="GO" id="GO:0003905">
    <property type="term" value="F:alkylbase DNA N-glycosylase activity"/>
    <property type="evidence" value="ECO:0007669"/>
    <property type="project" value="InterPro"/>
</dbReference>
<dbReference type="GO" id="GO:0003677">
    <property type="term" value="F:DNA binding"/>
    <property type="evidence" value="ECO:0007669"/>
    <property type="project" value="InterPro"/>
</dbReference>
<dbReference type="GO" id="GO:0006284">
    <property type="term" value="P:base-excision repair"/>
    <property type="evidence" value="ECO:0007669"/>
    <property type="project" value="InterPro"/>
</dbReference>
<dbReference type="CDD" id="cd00540">
    <property type="entry name" value="AAG"/>
    <property type="match status" value="1"/>
</dbReference>
<dbReference type="Gene3D" id="3.10.300.10">
    <property type="entry name" value="Methylpurine-DNA glycosylase (MPG)"/>
    <property type="match status" value="1"/>
</dbReference>
<dbReference type="HAMAP" id="MF_00527">
    <property type="entry name" value="3MGH"/>
    <property type="match status" value="1"/>
</dbReference>
<dbReference type="InterPro" id="IPR011034">
    <property type="entry name" value="Formyl_transferase-like_C_sf"/>
</dbReference>
<dbReference type="InterPro" id="IPR003180">
    <property type="entry name" value="MPG"/>
</dbReference>
<dbReference type="InterPro" id="IPR036995">
    <property type="entry name" value="MPG_sf"/>
</dbReference>
<dbReference type="NCBIfam" id="TIGR00567">
    <property type="entry name" value="3mg"/>
    <property type="match status" value="1"/>
</dbReference>
<dbReference type="NCBIfam" id="NF002004">
    <property type="entry name" value="PRK00802.1-4"/>
    <property type="match status" value="1"/>
</dbReference>
<dbReference type="PANTHER" id="PTHR10429">
    <property type="entry name" value="DNA-3-METHYLADENINE GLYCOSYLASE"/>
    <property type="match status" value="1"/>
</dbReference>
<dbReference type="PANTHER" id="PTHR10429:SF0">
    <property type="entry name" value="DNA-3-METHYLADENINE GLYCOSYLASE"/>
    <property type="match status" value="1"/>
</dbReference>
<dbReference type="Pfam" id="PF02245">
    <property type="entry name" value="Pur_DNA_glyco"/>
    <property type="match status" value="1"/>
</dbReference>
<dbReference type="SUPFAM" id="SSF50486">
    <property type="entry name" value="FMT C-terminal domain-like"/>
    <property type="match status" value="1"/>
</dbReference>